<name>PTAS_RICFE</name>
<keyword id="KW-0012">Acyltransferase</keyword>
<keyword id="KW-0963">Cytoplasm</keyword>
<keyword id="KW-0808">Transferase</keyword>
<evidence type="ECO:0000305" key="1"/>
<sequence length="349" mass="37938">MKKQHIINETFLDAILAKKLGTTYTPPKEINDPDFDEAAKHFIDLLLRADGFKPVKTAVVHPIDKESLLGAVRAAQFNVIKPVLIGPQHKIESVAKVNNVDLEDYQVINVEHSHEAAKKAVELAKKREVAAIMKGSLHTDELMSAVVHKENGLRTERRISHAFLMAVATFPKPFIITDAAINIRPTLEDKRDIVQNAIDLMHMIKEDKQVRVAVLSAVETVTSAIPTTLDAAALSKMADRGQITSAIVDGPLAFDNAISLFAAEAKGISSSVSGNADILVVPDLESGNMLAKQLKYLGQAVMAGIVLGARVPIILTSRADPMDMRVISCVLASFIYNHTKAKLHIQAGK</sequence>
<dbReference type="EC" id="2.3.1.8"/>
<dbReference type="EMBL" id="CP000053">
    <property type="protein sequence ID" value="AAY60947.1"/>
    <property type="molecule type" value="Genomic_DNA"/>
</dbReference>
<dbReference type="SMR" id="Q4UNB1"/>
<dbReference type="STRING" id="315456.RF_0096"/>
<dbReference type="KEGG" id="rfe:RF_0096"/>
<dbReference type="eggNOG" id="COG0280">
    <property type="taxonomic scope" value="Bacteria"/>
</dbReference>
<dbReference type="HOGENOM" id="CLU_056531_1_0_5"/>
<dbReference type="OrthoDB" id="9800237at2"/>
<dbReference type="UniPathway" id="UPA00340">
    <property type="reaction ID" value="UER00459"/>
</dbReference>
<dbReference type="Proteomes" id="UP000008548">
    <property type="component" value="Chromosome"/>
</dbReference>
<dbReference type="GO" id="GO:0005737">
    <property type="term" value="C:cytoplasm"/>
    <property type="evidence" value="ECO:0007669"/>
    <property type="project" value="UniProtKB-SubCell"/>
</dbReference>
<dbReference type="GO" id="GO:0008959">
    <property type="term" value="F:phosphate acetyltransferase activity"/>
    <property type="evidence" value="ECO:0007669"/>
    <property type="project" value="UniProtKB-EC"/>
</dbReference>
<dbReference type="GO" id="GO:0006085">
    <property type="term" value="P:acetyl-CoA biosynthetic process"/>
    <property type="evidence" value="ECO:0007669"/>
    <property type="project" value="UniProtKB-UniPathway"/>
</dbReference>
<dbReference type="Gene3D" id="3.40.718.10">
    <property type="entry name" value="Isopropylmalate Dehydrogenase"/>
    <property type="match status" value="1"/>
</dbReference>
<dbReference type="InterPro" id="IPR012147">
    <property type="entry name" value="P_Ac_Bu_trans"/>
</dbReference>
<dbReference type="InterPro" id="IPR050500">
    <property type="entry name" value="Phos_Acetyltrans/Butyryltrans"/>
</dbReference>
<dbReference type="InterPro" id="IPR002505">
    <property type="entry name" value="PTA_PTB"/>
</dbReference>
<dbReference type="NCBIfam" id="NF006045">
    <property type="entry name" value="PRK08190.1"/>
    <property type="match status" value="1"/>
</dbReference>
<dbReference type="NCBIfam" id="NF008852">
    <property type="entry name" value="PRK11890.1"/>
    <property type="match status" value="1"/>
</dbReference>
<dbReference type="PANTHER" id="PTHR43356">
    <property type="entry name" value="PHOSPHATE ACETYLTRANSFERASE"/>
    <property type="match status" value="1"/>
</dbReference>
<dbReference type="PANTHER" id="PTHR43356:SF2">
    <property type="entry name" value="PHOSPHATE ACETYLTRANSFERASE"/>
    <property type="match status" value="1"/>
</dbReference>
<dbReference type="Pfam" id="PF01515">
    <property type="entry name" value="PTA_PTB"/>
    <property type="match status" value="1"/>
</dbReference>
<dbReference type="PIRSF" id="PIRSF000428">
    <property type="entry name" value="P_Ac_trans"/>
    <property type="match status" value="1"/>
</dbReference>
<dbReference type="SUPFAM" id="SSF53659">
    <property type="entry name" value="Isocitrate/Isopropylmalate dehydrogenase-like"/>
    <property type="match status" value="1"/>
</dbReference>
<organism>
    <name type="scientific">Rickettsia felis (strain ATCC VR-1525 / URRWXCal2)</name>
    <name type="common">Rickettsia azadi</name>
    <dbReference type="NCBI Taxonomy" id="315456"/>
    <lineage>
        <taxon>Bacteria</taxon>
        <taxon>Pseudomonadati</taxon>
        <taxon>Pseudomonadota</taxon>
        <taxon>Alphaproteobacteria</taxon>
        <taxon>Rickettsiales</taxon>
        <taxon>Rickettsiaceae</taxon>
        <taxon>Rickettsieae</taxon>
        <taxon>Rickettsia</taxon>
        <taxon>spotted fever group</taxon>
    </lineage>
</organism>
<protein>
    <recommendedName>
        <fullName>Phosphate acetyltransferase</fullName>
        <ecNumber>2.3.1.8</ecNumber>
    </recommendedName>
    <alternativeName>
        <fullName>Phosphotransacetylase</fullName>
    </alternativeName>
</protein>
<accession>Q4UNB1</accession>
<feature type="chain" id="PRO_0000286662" description="Phosphate acetyltransferase">
    <location>
        <begin position="1"/>
        <end position="349"/>
    </location>
</feature>
<reference key="1">
    <citation type="journal article" date="2005" name="PLoS Biol.">
        <title>The genome sequence of Rickettsia felis identifies the first putative conjugative plasmid in an obligate intracellular parasite.</title>
        <authorList>
            <person name="Ogata H."/>
            <person name="Renesto P."/>
            <person name="Audic S."/>
            <person name="Robert C."/>
            <person name="Blanc G."/>
            <person name="Fournier P.-E."/>
            <person name="Parinello H."/>
            <person name="Claverie J.-M."/>
            <person name="Raoult D."/>
        </authorList>
    </citation>
    <scope>NUCLEOTIDE SEQUENCE [LARGE SCALE GENOMIC DNA]</scope>
    <source>
        <strain>ATCC VR-1525 / URRWXCal2</strain>
    </source>
</reference>
<gene>
    <name type="primary">pta</name>
    <name type="ordered locus">RF_0096</name>
</gene>
<proteinExistence type="inferred from homology"/>
<comment type="catalytic activity">
    <reaction>
        <text>acetyl-CoA + phosphate = acetyl phosphate + CoA</text>
        <dbReference type="Rhea" id="RHEA:19521"/>
        <dbReference type="ChEBI" id="CHEBI:22191"/>
        <dbReference type="ChEBI" id="CHEBI:43474"/>
        <dbReference type="ChEBI" id="CHEBI:57287"/>
        <dbReference type="ChEBI" id="CHEBI:57288"/>
        <dbReference type="EC" id="2.3.1.8"/>
    </reaction>
</comment>
<comment type="pathway">
    <text>Metabolic intermediate biosynthesis; acetyl-CoA biosynthesis; acetyl-CoA from acetate: step 2/2.</text>
</comment>
<comment type="subcellular location">
    <subcellularLocation>
        <location evidence="1">Cytoplasm</location>
    </subcellularLocation>
</comment>
<comment type="similarity">
    <text evidence="1">Belongs to the phosphate acetyltransferase and butyryltransferase family.</text>
</comment>